<organism>
    <name type="scientific">Gallus gallus</name>
    <name type="common">Chicken</name>
    <dbReference type="NCBI Taxonomy" id="9031"/>
    <lineage>
        <taxon>Eukaryota</taxon>
        <taxon>Metazoa</taxon>
        <taxon>Chordata</taxon>
        <taxon>Craniata</taxon>
        <taxon>Vertebrata</taxon>
        <taxon>Euteleostomi</taxon>
        <taxon>Archelosauria</taxon>
        <taxon>Archosauria</taxon>
        <taxon>Dinosauria</taxon>
        <taxon>Saurischia</taxon>
        <taxon>Theropoda</taxon>
        <taxon>Coelurosauria</taxon>
        <taxon>Aves</taxon>
        <taxon>Neognathae</taxon>
        <taxon>Galloanserae</taxon>
        <taxon>Galliformes</taxon>
        <taxon>Phasianidae</taxon>
        <taxon>Phasianinae</taxon>
        <taxon>Gallus</taxon>
    </lineage>
</organism>
<sequence>MHKFTGVNAKFQQPALRNLSPVVVEREREEFVGFFPQIVRDLTEDGIGHPEVGDAVARLKEVLQYNAPGGKCNRGLTVVAAYRELSGPGQKDAESLRCALAVGWCIELFQAFFLVADDIMDQSLTRRGQLCWYKKEGVGLDAINDSFLLESSVYRVLKKYCRQRPYYVHLLELFLQTAYQTELGQMLDLITAPVSKVDLSHFSEERYKAIVKYKTAFYSFYLPVAAAMYMVGIDSKEEHENAKAILLEMGEYFQIQDDYLDCFGDPALTGKVGTDIQDNKCSWLVVQCLQRVTPEQRQLLEDNYGRKEPEKVAKVKELYEAVGMRAAFQQYEESSYRRLQELIEKHSNRLPKEIFLGLAQKIYKRQK</sequence>
<reference key="1">
    <citation type="journal article" date="1981" name="Biochemistry">
        <title>Isolation and characterization of a photoaffinity-labeled peptide from the catalytic site of prenyltransferase.</title>
        <authorList>
            <person name="Brems D.N."/>
            <person name="Bruenger E."/>
            <person name="Rillings H.C."/>
        </authorList>
    </citation>
    <scope>PROTEIN SEQUENCE OF 187-216</scope>
    <source>
        <tissue>Liver</tissue>
    </source>
</reference>
<reference key="2">
    <citation type="journal article" date="1994" name="Biochemistry">
        <title>Crystal structure of recombinant farnesyl diphosphate synthase at 2.6-A resolution.</title>
        <authorList>
            <person name="Tarshis L.C."/>
            <person name="Yan M."/>
            <person name="Poulter C.D."/>
            <person name="Sacchettini J.C."/>
        </authorList>
    </citation>
    <scope>X-RAY CRYSTALLOGRAPHY (2.6 ANGSTROMS) OF 20-367</scope>
    <scope>SUBUNIT</scope>
    <scope>COFACTOR</scope>
    <source>
        <tissue>Liver</tissue>
    </source>
</reference>
<reference key="3">
    <citation type="journal article" date="1996" name="Proc. Natl. Acad. Sci. U.S.A.">
        <title>Regulation of product chain length by isoprenyl diphosphate synthases.</title>
        <authorList>
            <person name="Tarshis L.C."/>
            <person name="Proteau P.J."/>
            <person name="Kellogg B.A."/>
            <person name="Sacchettini J.C."/>
            <person name="Poulter C.D."/>
        </authorList>
    </citation>
    <scope>X-RAY CRYSTALLOGRAPHY (2.5 ANGSTROMS) OF 20-367 IN COMPLEXES WITH MAGNESIUM IONS; DIMETHYLALLYL DIPHOSPHATE; GERANYL DIPHOSPHATE AND FARNESYL DIPHOSPHATE</scope>
    <scope>MUTAGENESIS OF PHE-112 AND PHE-113</scope>
    <scope>SUBUNIT</scope>
    <source>
        <tissue>Liver</tissue>
    </source>
</reference>
<comment type="function">
    <text>Catalyzes the sequential condensation of isopentenyl pyrophosphate with the allylic pyrophosphates, dimethylallyl pyrophosphate, and then with the resultant geranylpyrophosphate to the ultimate product farnesyl pyrophosphate.</text>
</comment>
<comment type="catalytic activity">
    <reaction>
        <text>isopentenyl diphosphate + dimethylallyl diphosphate = (2E)-geranyl diphosphate + diphosphate</text>
        <dbReference type="Rhea" id="RHEA:22408"/>
        <dbReference type="ChEBI" id="CHEBI:33019"/>
        <dbReference type="ChEBI" id="CHEBI:57623"/>
        <dbReference type="ChEBI" id="CHEBI:58057"/>
        <dbReference type="ChEBI" id="CHEBI:128769"/>
        <dbReference type="EC" id="2.5.1.1"/>
    </reaction>
</comment>
<comment type="catalytic activity">
    <reaction>
        <text>isopentenyl diphosphate + (2E)-geranyl diphosphate = (2E,6E)-farnesyl diphosphate + diphosphate</text>
        <dbReference type="Rhea" id="RHEA:19361"/>
        <dbReference type="ChEBI" id="CHEBI:33019"/>
        <dbReference type="ChEBI" id="CHEBI:58057"/>
        <dbReference type="ChEBI" id="CHEBI:128769"/>
        <dbReference type="ChEBI" id="CHEBI:175763"/>
        <dbReference type="EC" id="2.5.1.10"/>
    </reaction>
</comment>
<comment type="cofactor">
    <cofactor evidence="6">
        <name>Mg(2+)</name>
        <dbReference type="ChEBI" id="CHEBI:18420"/>
    </cofactor>
    <text evidence="6">Binds 2 Mg(2+) ions per subunit.</text>
</comment>
<comment type="pathway">
    <text>Isoprenoid biosynthesis; farnesyl diphosphate biosynthesis; farnesyl diphosphate from geranyl diphosphate and isopentenyl diphosphate: step 1/1.</text>
</comment>
<comment type="pathway">
    <text>Isoprenoid biosynthesis; geranyl diphosphate biosynthesis; geranyl diphosphate from dimethylallyl diphosphate and isopentenyl diphosphate: step 1/1.</text>
</comment>
<comment type="subunit">
    <text evidence="3 4">Homodimer.</text>
</comment>
<comment type="subcellular location">
    <subcellularLocation>
        <location>Cytoplasm</location>
    </subcellularLocation>
</comment>
<comment type="similarity">
    <text evidence="5">Belongs to the FPP/GGPP synthase family.</text>
</comment>
<protein>
    <recommendedName>
        <fullName>Farnesyl pyrophosphate synthase</fullName>
        <shortName>FPP synthase</shortName>
        <shortName>FPS</shortName>
        <ecNumber>2.5.1.10</ecNumber>
    </recommendedName>
    <alternativeName>
        <fullName>(2E,6E)-farnesyl diphosphate synthase</fullName>
    </alternativeName>
    <alternativeName>
        <fullName>Dimethylallyltranstransferase</fullName>
        <ecNumber>2.5.1.1</ecNumber>
    </alternativeName>
    <alternativeName>
        <fullName>Farnesyl diphosphate synthase</fullName>
    </alternativeName>
    <alternativeName>
        <fullName>Geranyltranstransferase</fullName>
    </alternativeName>
</protein>
<gene>
    <name type="primary">FDPS</name>
</gene>
<proteinExistence type="evidence at protein level"/>
<name>FPPS_CHICK</name>
<feature type="chain" id="PRO_0000123947" description="Farnesyl pyrophosphate synthase">
    <location>
        <begin position="1"/>
        <end position="367"/>
    </location>
</feature>
<feature type="binding site" evidence="2">
    <location>
        <position position="71"/>
    </location>
    <ligand>
        <name>isopentenyl diphosphate</name>
        <dbReference type="ChEBI" id="CHEBI:128769"/>
    </ligand>
</feature>
<feature type="binding site" evidence="2">
    <location>
        <position position="74"/>
    </location>
    <ligand>
        <name>isopentenyl diphosphate</name>
        <dbReference type="ChEBI" id="CHEBI:128769"/>
    </ligand>
</feature>
<feature type="binding site" evidence="2">
    <location>
        <position position="110"/>
    </location>
    <ligand>
        <name>isopentenyl diphosphate</name>
        <dbReference type="ChEBI" id="CHEBI:128769"/>
    </ligand>
</feature>
<feature type="binding site">
    <location>
        <position position="117"/>
    </location>
    <ligand>
        <name>Mg(2+)</name>
        <dbReference type="ChEBI" id="CHEBI:18420"/>
        <label>1</label>
    </ligand>
</feature>
<feature type="binding site">
    <location>
        <position position="117"/>
    </location>
    <ligand>
        <name>Mg(2+)</name>
        <dbReference type="ChEBI" id="CHEBI:18420"/>
        <label>2</label>
    </ligand>
</feature>
<feature type="binding site">
    <location>
        <position position="121"/>
    </location>
    <ligand>
        <name>Mg(2+)</name>
        <dbReference type="ChEBI" id="CHEBI:18420"/>
        <label>1</label>
    </ligand>
</feature>
<feature type="binding site">
    <location>
        <position position="121"/>
    </location>
    <ligand>
        <name>Mg(2+)</name>
        <dbReference type="ChEBI" id="CHEBI:18420"/>
        <label>2</label>
    </ligand>
</feature>
<feature type="binding site">
    <location>
        <position position="126"/>
    </location>
    <ligand>
        <name>dimethylallyl diphosphate</name>
        <dbReference type="ChEBI" id="CHEBI:57623"/>
    </ligand>
</feature>
<feature type="binding site" evidence="2">
    <location>
        <position position="127"/>
    </location>
    <ligand>
        <name>isopentenyl diphosphate</name>
        <dbReference type="ChEBI" id="CHEBI:128769"/>
    </ligand>
</feature>
<feature type="binding site">
    <location>
        <position position="214"/>
    </location>
    <ligand>
        <name>dimethylallyl diphosphate</name>
        <dbReference type="ChEBI" id="CHEBI:57623"/>
    </ligand>
</feature>
<feature type="binding site" evidence="1">
    <location>
        <position position="215"/>
    </location>
    <ligand>
        <name>dimethylallyl diphosphate</name>
        <dbReference type="ChEBI" id="CHEBI:57623"/>
    </ligand>
</feature>
<feature type="binding site" evidence="1">
    <location>
        <position position="254"/>
    </location>
    <ligand>
        <name>dimethylallyl diphosphate</name>
        <dbReference type="ChEBI" id="CHEBI:57623"/>
    </ligand>
</feature>
<feature type="binding site" evidence="1">
    <location>
        <position position="271"/>
    </location>
    <ligand>
        <name>dimethylallyl diphosphate</name>
        <dbReference type="ChEBI" id="CHEBI:57623"/>
    </ligand>
</feature>
<feature type="binding site">
    <location>
        <position position="280"/>
    </location>
    <ligand>
        <name>dimethylallyl diphosphate</name>
        <dbReference type="ChEBI" id="CHEBI:57623"/>
    </ligand>
</feature>
<feature type="site" description="Important for determining product chain length">
    <location>
        <position position="112"/>
    </location>
</feature>
<feature type="site" description="Important for determining product chain length">
    <location>
        <position position="113"/>
    </location>
</feature>
<feature type="mutagenesis site" description="Alters selectivity towards product chain length, so that geranylgeranyl diphosphate is produced." evidence="4">
    <original>F</original>
    <variation>A</variation>
    <location>
        <position position="112"/>
    </location>
</feature>
<feature type="mutagenesis site" description="Alters selectivity towards product chain length, so that geranylfarnesyl diphosphate is produced." evidence="4">
    <original>F</original>
    <variation>S</variation>
    <location>
        <position position="113"/>
    </location>
</feature>
<feature type="sequence conflict" description="In Ref. 1; AA sequence." evidence="5" ref="1">
    <original>T</original>
    <variation>G</variation>
    <location>
        <position position="191"/>
    </location>
</feature>
<feature type="sequence conflict" description="In Ref. 1; AA sequence." evidence="5" ref="1">
    <original>HFS</original>
    <variation>TFQ</variation>
    <location>
        <begin position="201"/>
        <end position="203"/>
    </location>
</feature>
<feature type="sequence conflict" description="In Ref. 1; AA sequence." evidence="5" ref="1">
    <original>IVK</original>
    <variation>FVP</variation>
    <location>
        <begin position="210"/>
        <end position="212"/>
    </location>
</feature>
<feature type="sequence conflict" description="In Ref. 1; AA sequence." evidence="5" ref="1">
    <original>TA</original>
    <variation>AM</variation>
    <location>
        <begin position="215"/>
        <end position="216"/>
    </location>
</feature>
<feature type="helix" evidence="10">
    <location>
        <begin position="21"/>
        <end position="33"/>
    </location>
</feature>
<feature type="helix" evidence="10">
    <location>
        <begin position="35"/>
        <end position="43"/>
    </location>
</feature>
<feature type="turn" evidence="10">
    <location>
        <begin position="44"/>
        <end position="46"/>
    </location>
</feature>
<feature type="turn" evidence="10">
    <location>
        <begin position="50"/>
        <end position="52"/>
    </location>
</feature>
<feature type="helix" evidence="10">
    <location>
        <begin position="53"/>
        <end position="66"/>
    </location>
</feature>
<feature type="strand" evidence="10">
    <location>
        <begin position="67"/>
        <end position="70"/>
    </location>
</feature>
<feature type="helix" evidence="10">
    <location>
        <begin position="73"/>
        <end position="85"/>
    </location>
</feature>
<feature type="helix" evidence="10">
    <location>
        <begin position="88"/>
        <end position="90"/>
    </location>
</feature>
<feature type="helix" evidence="10">
    <location>
        <begin position="93"/>
        <end position="121"/>
    </location>
</feature>
<feature type="helix" evidence="10">
    <location>
        <begin position="132"/>
        <end position="134"/>
    </location>
</feature>
<feature type="turn" evidence="10">
    <location>
        <begin position="136"/>
        <end position="140"/>
    </location>
</feature>
<feature type="helix" evidence="10">
    <location>
        <begin position="141"/>
        <end position="161"/>
    </location>
</feature>
<feature type="strand" evidence="8">
    <location>
        <begin position="162"/>
        <end position="164"/>
    </location>
</feature>
<feature type="helix" evidence="10">
    <location>
        <begin position="167"/>
        <end position="191"/>
    </location>
</feature>
<feature type="strand" evidence="9">
    <location>
        <begin position="194"/>
        <end position="196"/>
    </location>
</feature>
<feature type="strand" evidence="9">
    <location>
        <begin position="199"/>
        <end position="201"/>
    </location>
</feature>
<feature type="helix" evidence="10">
    <location>
        <begin position="204"/>
        <end position="214"/>
    </location>
</feature>
<feature type="helix" evidence="10">
    <location>
        <begin position="216"/>
        <end position="219"/>
    </location>
</feature>
<feature type="helix" evidence="10">
    <location>
        <begin position="221"/>
        <end position="231"/>
    </location>
</feature>
<feature type="helix" evidence="10">
    <location>
        <begin position="236"/>
        <end position="263"/>
    </location>
</feature>
<feature type="turn" evidence="8">
    <location>
        <begin position="266"/>
        <end position="269"/>
    </location>
</feature>
<feature type="strand" evidence="10">
    <location>
        <begin position="276"/>
        <end position="278"/>
    </location>
</feature>
<feature type="helix" evidence="10">
    <location>
        <begin position="283"/>
        <end position="291"/>
    </location>
</feature>
<feature type="helix" evidence="10">
    <location>
        <begin position="294"/>
        <end position="303"/>
    </location>
</feature>
<feature type="strand" evidence="7">
    <location>
        <begin position="304"/>
        <end position="307"/>
    </location>
</feature>
<feature type="helix" evidence="10">
    <location>
        <begin position="309"/>
        <end position="322"/>
    </location>
</feature>
<feature type="helix" evidence="10">
    <location>
        <begin position="324"/>
        <end position="346"/>
    </location>
</feature>
<feature type="strand" evidence="10">
    <location>
        <begin position="348"/>
        <end position="350"/>
    </location>
</feature>
<feature type="helix" evidence="10">
    <location>
        <begin position="353"/>
        <end position="362"/>
    </location>
</feature>
<dbReference type="EC" id="2.5.1.10"/>
<dbReference type="EC" id="2.5.1.1"/>
<dbReference type="PDB" id="1FPS">
    <property type="method" value="X-ray"/>
    <property type="resolution" value="2.60 A"/>
    <property type="chains" value="A=20-367"/>
</dbReference>
<dbReference type="PDB" id="1UBV">
    <property type="method" value="X-ray"/>
    <property type="resolution" value="2.50 A"/>
    <property type="chains" value="A=1-367"/>
</dbReference>
<dbReference type="PDB" id="1UBW">
    <property type="method" value="X-ray"/>
    <property type="resolution" value="2.50 A"/>
    <property type="chains" value="A=1-367"/>
</dbReference>
<dbReference type="PDB" id="1UBX">
    <property type="method" value="X-ray"/>
    <property type="resolution" value="2.50 A"/>
    <property type="chains" value="A=1-367"/>
</dbReference>
<dbReference type="PDB" id="1UBY">
    <property type="method" value="X-ray"/>
    <property type="resolution" value="2.40 A"/>
    <property type="chains" value="A=1-367"/>
</dbReference>
<dbReference type="PDBsum" id="1FPS"/>
<dbReference type="PDBsum" id="1UBV"/>
<dbReference type="PDBsum" id="1UBW"/>
<dbReference type="PDBsum" id="1UBX"/>
<dbReference type="PDBsum" id="1UBY"/>
<dbReference type="SMR" id="P08836"/>
<dbReference type="FunCoup" id="P08836">
    <property type="interactions" value="2345"/>
</dbReference>
<dbReference type="STRING" id="9031.ENSGALP00000043372"/>
<dbReference type="PaxDb" id="9031-ENSGALP00000043372"/>
<dbReference type="VEuPathDB" id="HostDB:geneid_425061"/>
<dbReference type="eggNOG" id="KOG0711">
    <property type="taxonomic scope" value="Eukaryota"/>
</dbReference>
<dbReference type="InParanoid" id="P08836"/>
<dbReference type="OrthoDB" id="10257492at2759"/>
<dbReference type="PhylomeDB" id="P08836"/>
<dbReference type="UniPathway" id="UPA00259">
    <property type="reaction ID" value="UER00368"/>
</dbReference>
<dbReference type="UniPathway" id="UPA00260">
    <property type="reaction ID" value="UER00369"/>
</dbReference>
<dbReference type="EvolutionaryTrace" id="P08836"/>
<dbReference type="Proteomes" id="UP000000539">
    <property type="component" value="Unassembled WGS sequence"/>
</dbReference>
<dbReference type="GO" id="GO:0005737">
    <property type="term" value="C:cytoplasm"/>
    <property type="evidence" value="ECO:0000318"/>
    <property type="project" value="GO_Central"/>
</dbReference>
<dbReference type="GO" id="GO:0004337">
    <property type="term" value="F:(2E,6E)-farnesyl diphosphate synthase activity"/>
    <property type="evidence" value="ECO:0000318"/>
    <property type="project" value="GO_Central"/>
</dbReference>
<dbReference type="GO" id="GO:0004161">
    <property type="term" value="F:dimethylallyltranstransferase activity"/>
    <property type="evidence" value="ECO:0000318"/>
    <property type="project" value="GO_Central"/>
</dbReference>
<dbReference type="GO" id="GO:0046872">
    <property type="term" value="F:metal ion binding"/>
    <property type="evidence" value="ECO:0007669"/>
    <property type="project" value="UniProtKB-KW"/>
</dbReference>
<dbReference type="GO" id="GO:0006695">
    <property type="term" value="P:cholesterol biosynthetic process"/>
    <property type="evidence" value="ECO:0007669"/>
    <property type="project" value="UniProtKB-KW"/>
</dbReference>
<dbReference type="GO" id="GO:0045337">
    <property type="term" value="P:farnesyl diphosphate biosynthetic process"/>
    <property type="evidence" value="ECO:0000318"/>
    <property type="project" value="GO_Central"/>
</dbReference>
<dbReference type="GO" id="GO:0033384">
    <property type="term" value="P:geranyl diphosphate biosynthetic process"/>
    <property type="evidence" value="ECO:0007669"/>
    <property type="project" value="UniProtKB-UniPathway"/>
</dbReference>
<dbReference type="CDD" id="cd00685">
    <property type="entry name" value="Trans_IPPS_HT"/>
    <property type="match status" value="1"/>
</dbReference>
<dbReference type="FunFam" id="1.10.600.10:FF:000006">
    <property type="entry name" value="Farnesyl pyrophosphate synthase"/>
    <property type="match status" value="1"/>
</dbReference>
<dbReference type="Gene3D" id="1.10.600.10">
    <property type="entry name" value="Farnesyl Diphosphate Synthase"/>
    <property type="match status" value="1"/>
</dbReference>
<dbReference type="InterPro" id="IPR039702">
    <property type="entry name" value="FPS1-like"/>
</dbReference>
<dbReference type="InterPro" id="IPR008949">
    <property type="entry name" value="Isoprenoid_synthase_dom_sf"/>
</dbReference>
<dbReference type="InterPro" id="IPR000092">
    <property type="entry name" value="Polyprenyl_synt"/>
</dbReference>
<dbReference type="InterPro" id="IPR033749">
    <property type="entry name" value="Polyprenyl_synt_CS"/>
</dbReference>
<dbReference type="PANTHER" id="PTHR11525:SF0">
    <property type="entry name" value="FARNESYL PYROPHOSPHATE SYNTHASE"/>
    <property type="match status" value="1"/>
</dbReference>
<dbReference type="PANTHER" id="PTHR11525">
    <property type="entry name" value="FARNESYL-PYROPHOSPHATE SYNTHETASE"/>
    <property type="match status" value="1"/>
</dbReference>
<dbReference type="Pfam" id="PF00348">
    <property type="entry name" value="polyprenyl_synt"/>
    <property type="match status" value="1"/>
</dbReference>
<dbReference type="SFLD" id="SFLDS00005">
    <property type="entry name" value="Isoprenoid_Synthase_Type_I"/>
    <property type="match status" value="1"/>
</dbReference>
<dbReference type="SFLD" id="SFLDG01017">
    <property type="entry name" value="Polyprenyl_Transferase_Like"/>
    <property type="match status" value="1"/>
</dbReference>
<dbReference type="SUPFAM" id="SSF48576">
    <property type="entry name" value="Terpenoid synthases"/>
    <property type="match status" value="1"/>
</dbReference>
<dbReference type="PROSITE" id="PS00723">
    <property type="entry name" value="POLYPRENYL_SYNTHASE_1"/>
    <property type="match status" value="1"/>
</dbReference>
<dbReference type="PROSITE" id="PS00444">
    <property type="entry name" value="POLYPRENYL_SYNTHASE_2"/>
    <property type="match status" value="1"/>
</dbReference>
<accession>P08836</accession>
<keyword id="KW-0002">3D-structure</keyword>
<keyword id="KW-0152">Cholesterol biosynthesis</keyword>
<keyword id="KW-0153">Cholesterol metabolism</keyword>
<keyword id="KW-0963">Cytoplasm</keyword>
<keyword id="KW-0903">Direct protein sequencing</keyword>
<keyword id="KW-0414">Isoprene biosynthesis</keyword>
<keyword id="KW-0444">Lipid biosynthesis</keyword>
<keyword id="KW-0443">Lipid metabolism</keyword>
<keyword id="KW-0460">Magnesium</keyword>
<keyword id="KW-0479">Metal-binding</keyword>
<keyword id="KW-1185">Reference proteome</keyword>
<keyword id="KW-0752">Steroid biosynthesis</keyword>
<keyword id="KW-0753">Steroid metabolism</keyword>
<keyword id="KW-0756">Sterol biosynthesis</keyword>
<keyword id="KW-1207">Sterol metabolism</keyword>
<keyword id="KW-0808">Transferase</keyword>
<evidence type="ECO:0000250" key="1"/>
<evidence type="ECO:0000250" key="2">
    <source>
        <dbReference type="UniProtKB" id="P14324"/>
    </source>
</evidence>
<evidence type="ECO:0000269" key="3">
    <source>
    </source>
</evidence>
<evidence type="ECO:0000269" key="4">
    <source>
    </source>
</evidence>
<evidence type="ECO:0000305" key="5"/>
<evidence type="ECO:0000305" key="6">
    <source>
    </source>
</evidence>
<evidence type="ECO:0007829" key="7">
    <source>
        <dbReference type="PDB" id="1FPS"/>
    </source>
</evidence>
<evidence type="ECO:0007829" key="8">
    <source>
        <dbReference type="PDB" id="1UBV"/>
    </source>
</evidence>
<evidence type="ECO:0007829" key="9">
    <source>
        <dbReference type="PDB" id="1UBX"/>
    </source>
</evidence>
<evidence type="ECO:0007829" key="10">
    <source>
        <dbReference type="PDB" id="1UBY"/>
    </source>
</evidence>